<accession>Q31I61</accession>
<organism>
    <name type="scientific">Hydrogenovibrio crunogenus (strain DSM 25203 / XCL-2)</name>
    <name type="common">Thiomicrospira crunogena</name>
    <dbReference type="NCBI Taxonomy" id="317025"/>
    <lineage>
        <taxon>Bacteria</taxon>
        <taxon>Pseudomonadati</taxon>
        <taxon>Pseudomonadota</taxon>
        <taxon>Gammaproteobacteria</taxon>
        <taxon>Thiotrichales</taxon>
        <taxon>Piscirickettsiaceae</taxon>
        <taxon>Hydrogenovibrio</taxon>
    </lineage>
</organism>
<proteinExistence type="inferred from homology"/>
<name>MURD_HYDCU</name>
<evidence type="ECO:0000255" key="1">
    <source>
        <dbReference type="HAMAP-Rule" id="MF_00639"/>
    </source>
</evidence>
<protein>
    <recommendedName>
        <fullName evidence="1">UDP-N-acetylmuramoylalanine--D-glutamate ligase</fullName>
        <ecNumber evidence="1">6.3.2.9</ecNumber>
    </recommendedName>
    <alternativeName>
        <fullName evidence="1">D-glutamic acid-adding enzyme</fullName>
    </alternativeName>
    <alternativeName>
        <fullName evidence="1">UDP-N-acetylmuramoyl-L-alanyl-D-glutamate synthetase</fullName>
    </alternativeName>
</protein>
<dbReference type="EC" id="6.3.2.9" evidence="1"/>
<dbReference type="EMBL" id="CP000109">
    <property type="protein sequence ID" value="ABB41162.1"/>
    <property type="molecule type" value="Genomic_DNA"/>
</dbReference>
<dbReference type="SMR" id="Q31I61"/>
<dbReference type="STRING" id="317025.Tcr_0566"/>
<dbReference type="KEGG" id="tcx:Tcr_0566"/>
<dbReference type="eggNOG" id="COG0771">
    <property type="taxonomic scope" value="Bacteria"/>
</dbReference>
<dbReference type="HOGENOM" id="CLU_032540_1_0_6"/>
<dbReference type="OrthoDB" id="9809796at2"/>
<dbReference type="UniPathway" id="UPA00219"/>
<dbReference type="GO" id="GO:0005737">
    <property type="term" value="C:cytoplasm"/>
    <property type="evidence" value="ECO:0007669"/>
    <property type="project" value="UniProtKB-SubCell"/>
</dbReference>
<dbReference type="GO" id="GO:0005524">
    <property type="term" value="F:ATP binding"/>
    <property type="evidence" value="ECO:0007669"/>
    <property type="project" value="UniProtKB-UniRule"/>
</dbReference>
<dbReference type="GO" id="GO:0008764">
    <property type="term" value="F:UDP-N-acetylmuramoylalanine-D-glutamate ligase activity"/>
    <property type="evidence" value="ECO:0007669"/>
    <property type="project" value="UniProtKB-UniRule"/>
</dbReference>
<dbReference type="GO" id="GO:0051301">
    <property type="term" value="P:cell division"/>
    <property type="evidence" value="ECO:0007669"/>
    <property type="project" value="UniProtKB-KW"/>
</dbReference>
<dbReference type="GO" id="GO:0071555">
    <property type="term" value="P:cell wall organization"/>
    <property type="evidence" value="ECO:0007669"/>
    <property type="project" value="UniProtKB-KW"/>
</dbReference>
<dbReference type="GO" id="GO:0009252">
    <property type="term" value="P:peptidoglycan biosynthetic process"/>
    <property type="evidence" value="ECO:0007669"/>
    <property type="project" value="UniProtKB-UniRule"/>
</dbReference>
<dbReference type="GO" id="GO:0008360">
    <property type="term" value="P:regulation of cell shape"/>
    <property type="evidence" value="ECO:0007669"/>
    <property type="project" value="UniProtKB-KW"/>
</dbReference>
<dbReference type="Gene3D" id="3.90.190.20">
    <property type="entry name" value="Mur ligase, C-terminal domain"/>
    <property type="match status" value="1"/>
</dbReference>
<dbReference type="Gene3D" id="3.40.1190.10">
    <property type="entry name" value="Mur-like, catalytic domain"/>
    <property type="match status" value="1"/>
</dbReference>
<dbReference type="Gene3D" id="3.40.50.720">
    <property type="entry name" value="NAD(P)-binding Rossmann-like Domain"/>
    <property type="match status" value="1"/>
</dbReference>
<dbReference type="HAMAP" id="MF_00639">
    <property type="entry name" value="MurD"/>
    <property type="match status" value="1"/>
</dbReference>
<dbReference type="InterPro" id="IPR036565">
    <property type="entry name" value="Mur-like_cat_sf"/>
</dbReference>
<dbReference type="InterPro" id="IPR004101">
    <property type="entry name" value="Mur_ligase_C"/>
</dbReference>
<dbReference type="InterPro" id="IPR036615">
    <property type="entry name" value="Mur_ligase_C_dom_sf"/>
</dbReference>
<dbReference type="InterPro" id="IPR013221">
    <property type="entry name" value="Mur_ligase_cen"/>
</dbReference>
<dbReference type="InterPro" id="IPR005762">
    <property type="entry name" value="MurD"/>
</dbReference>
<dbReference type="NCBIfam" id="TIGR01087">
    <property type="entry name" value="murD"/>
    <property type="match status" value="1"/>
</dbReference>
<dbReference type="PANTHER" id="PTHR43692">
    <property type="entry name" value="UDP-N-ACETYLMURAMOYLALANINE--D-GLUTAMATE LIGASE"/>
    <property type="match status" value="1"/>
</dbReference>
<dbReference type="PANTHER" id="PTHR43692:SF1">
    <property type="entry name" value="UDP-N-ACETYLMURAMOYLALANINE--D-GLUTAMATE LIGASE"/>
    <property type="match status" value="1"/>
</dbReference>
<dbReference type="Pfam" id="PF02875">
    <property type="entry name" value="Mur_ligase_C"/>
    <property type="match status" value="1"/>
</dbReference>
<dbReference type="Pfam" id="PF08245">
    <property type="entry name" value="Mur_ligase_M"/>
    <property type="match status" value="1"/>
</dbReference>
<dbReference type="Pfam" id="PF21799">
    <property type="entry name" value="MurD-like_N"/>
    <property type="match status" value="1"/>
</dbReference>
<dbReference type="SUPFAM" id="SSF51984">
    <property type="entry name" value="MurCD N-terminal domain"/>
    <property type="match status" value="1"/>
</dbReference>
<dbReference type="SUPFAM" id="SSF53623">
    <property type="entry name" value="MurD-like peptide ligases, catalytic domain"/>
    <property type="match status" value="1"/>
</dbReference>
<dbReference type="SUPFAM" id="SSF53244">
    <property type="entry name" value="MurD-like peptide ligases, peptide-binding domain"/>
    <property type="match status" value="1"/>
</dbReference>
<keyword id="KW-0067">ATP-binding</keyword>
<keyword id="KW-0131">Cell cycle</keyword>
<keyword id="KW-0132">Cell division</keyword>
<keyword id="KW-0133">Cell shape</keyword>
<keyword id="KW-0961">Cell wall biogenesis/degradation</keyword>
<keyword id="KW-0963">Cytoplasm</keyword>
<keyword id="KW-0436">Ligase</keyword>
<keyword id="KW-0547">Nucleotide-binding</keyword>
<keyword id="KW-0573">Peptidoglycan synthesis</keyword>
<sequence length="449" mass="48509">MYLVAGLGLTGQSVLNYFASQGEPCYALDTRPEFDTSELEKAYPDVAFATGTLPTQWCGKIDSIVLSPGIAKSEPWVKHCINQGTEVIGDIELFARAAGKPIVAITGSNGKSTVTTLVAEALKEAGYAVGVGGNIGCPALDLLTHPTEFDVYVLELSSFQLETTYSLQTIAATVLNISEDHMDRYLALEDYIQAKMTILNNTELAVLPLDFERVGIARPGDEVRFGLNYAEALPPKEYGIVMKNGQAWLGWEDHASVPVTAMAQQGLHHQLNALAMMALCRPFDLSDAVFEKVLKTFKGLPHRTQVVLEQEGVRWINDSKGTNVGATVTAIESIKETLDGQVILIAGGVGKEADFNELGQAVVQSCRQAILFGQDKAIIAQQLPQEKIQLVDTLSEAVLLAKTIAKSGDAVLFSPACASFDQFKNYIERGNAFEAFVQQFIANEVGGKS</sequence>
<comment type="function">
    <text evidence="1">Cell wall formation. Catalyzes the addition of glutamate to the nucleotide precursor UDP-N-acetylmuramoyl-L-alanine (UMA).</text>
</comment>
<comment type="catalytic activity">
    <reaction evidence="1">
        <text>UDP-N-acetyl-alpha-D-muramoyl-L-alanine + D-glutamate + ATP = UDP-N-acetyl-alpha-D-muramoyl-L-alanyl-D-glutamate + ADP + phosphate + H(+)</text>
        <dbReference type="Rhea" id="RHEA:16429"/>
        <dbReference type="ChEBI" id="CHEBI:15378"/>
        <dbReference type="ChEBI" id="CHEBI:29986"/>
        <dbReference type="ChEBI" id="CHEBI:30616"/>
        <dbReference type="ChEBI" id="CHEBI:43474"/>
        <dbReference type="ChEBI" id="CHEBI:83898"/>
        <dbReference type="ChEBI" id="CHEBI:83900"/>
        <dbReference type="ChEBI" id="CHEBI:456216"/>
        <dbReference type="EC" id="6.3.2.9"/>
    </reaction>
</comment>
<comment type="pathway">
    <text evidence="1">Cell wall biogenesis; peptidoglycan biosynthesis.</text>
</comment>
<comment type="subcellular location">
    <subcellularLocation>
        <location evidence="1">Cytoplasm</location>
    </subcellularLocation>
</comment>
<comment type="similarity">
    <text evidence="1">Belongs to the MurCDEF family.</text>
</comment>
<gene>
    <name evidence="1" type="primary">murD</name>
    <name type="ordered locus">Tcr_0566</name>
</gene>
<reference key="1">
    <citation type="journal article" date="2006" name="PLoS Biol.">
        <title>The genome of deep-sea vent chemolithoautotroph Thiomicrospira crunogena XCL-2.</title>
        <authorList>
            <person name="Scott K.M."/>
            <person name="Sievert S.M."/>
            <person name="Abril F.N."/>
            <person name="Ball L.A."/>
            <person name="Barrett C.J."/>
            <person name="Blake R.A."/>
            <person name="Boller A.J."/>
            <person name="Chain P.S.G."/>
            <person name="Clark J.A."/>
            <person name="Davis C.R."/>
            <person name="Detter C."/>
            <person name="Do K.F."/>
            <person name="Dobrinski K.P."/>
            <person name="Faza B.I."/>
            <person name="Fitzpatrick K.A."/>
            <person name="Freyermuth S.K."/>
            <person name="Harmer T.L."/>
            <person name="Hauser L.J."/>
            <person name="Huegler M."/>
            <person name="Kerfeld C.A."/>
            <person name="Klotz M.G."/>
            <person name="Kong W.W."/>
            <person name="Land M."/>
            <person name="Lapidus A."/>
            <person name="Larimer F.W."/>
            <person name="Longo D.L."/>
            <person name="Lucas S."/>
            <person name="Malfatti S.A."/>
            <person name="Massey S.E."/>
            <person name="Martin D.D."/>
            <person name="McCuddin Z."/>
            <person name="Meyer F."/>
            <person name="Moore J.L."/>
            <person name="Ocampo L.H. Jr."/>
            <person name="Paul J.H."/>
            <person name="Paulsen I.T."/>
            <person name="Reep D.K."/>
            <person name="Ren Q."/>
            <person name="Ross R.L."/>
            <person name="Sato P.Y."/>
            <person name="Thomas P."/>
            <person name="Tinkham L.E."/>
            <person name="Zeruth G.T."/>
        </authorList>
    </citation>
    <scope>NUCLEOTIDE SEQUENCE [LARGE SCALE GENOMIC DNA]</scope>
    <source>
        <strain>DSM 25203 / XCL-2</strain>
    </source>
</reference>
<feature type="chain" id="PRO_0000257260" description="UDP-N-acetylmuramoylalanine--D-glutamate ligase">
    <location>
        <begin position="1"/>
        <end position="449"/>
    </location>
</feature>
<feature type="binding site" evidence="1">
    <location>
        <begin position="107"/>
        <end position="113"/>
    </location>
    <ligand>
        <name>ATP</name>
        <dbReference type="ChEBI" id="CHEBI:30616"/>
    </ligand>
</feature>